<organism>
    <name type="scientific">Drosophila melanogaster</name>
    <name type="common">Fruit fly</name>
    <dbReference type="NCBI Taxonomy" id="7227"/>
    <lineage>
        <taxon>Eukaryota</taxon>
        <taxon>Metazoa</taxon>
        <taxon>Ecdysozoa</taxon>
        <taxon>Arthropoda</taxon>
        <taxon>Hexapoda</taxon>
        <taxon>Insecta</taxon>
        <taxon>Pterygota</taxon>
        <taxon>Neoptera</taxon>
        <taxon>Endopterygota</taxon>
        <taxon>Diptera</taxon>
        <taxon>Brachycera</taxon>
        <taxon>Muscomorpha</taxon>
        <taxon>Ephydroidea</taxon>
        <taxon>Drosophilidae</taxon>
        <taxon>Drosophila</taxon>
        <taxon>Sophophora</taxon>
    </lineage>
</organism>
<accession>P48596</accession>
<accession>Q6TY66</accession>
<accession>Q6TY71</accession>
<accession>Q6TY73</accession>
<accession>Q6TY74</accession>
<accession>Q6TY78</accession>
<accession>Q960S4</accession>
<accession>Q9W2J9</accession>
<accession>Q9W2K1</accession>
<accession>Q9Y0C8</accession>
<sequence length="324" mass="35541">MSFTRQLSEMSASELNDAIDDTNFPQAHILSRGRNNSVCSTSSTSGTSSLADRQQNQAEEATAIAGTPVEEVAPAPALVPLAGNQRPRLILKTNGSSPDSDGTQPKTPLTPRTSTTPGHEKCTFHHDLELDHKPPTREALLPDMARSYRLLLGGLGENPDRQGLIKTPERAAKAMLYFTKGYDQSLEDVLNGAVFDEDHDEMVVVKDIEMFSMCEHHLVPFYGKVSIGYLPCNKILGLSKLARIVEIFSRRLQVQERLTKQIAVAVTQAVQPAGVAVVVEGVHMCMVMRGVQKINSKTVTSTMLGVFRDDPKTREEFLNLVNSK</sequence>
<reference key="1">
    <citation type="journal article" date="1993" name="J. Biol. Chem.">
        <title>Multiple mRNAs from the Punch locus of Drosophila melanogaster encode isoforms of GTP cyclohydrolase I with distinct N-terminal domains.</title>
        <authorList>
            <person name="McLean J.R."/>
            <person name="Krishnakumar S."/>
            <person name="O'Donnell J.M."/>
        </authorList>
    </citation>
    <scope>NUCLEOTIDE SEQUENCE [MRNA] (ISOFORMS B AND C)</scope>
    <scope>FUNCTION</scope>
    <scope>TISSUE SPECIFICITY</scope>
    <scope>DEVELOPMENTAL STAGE</scope>
    <source>
        <tissue>Head</tissue>
    </source>
</reference>
<reference key="2">
    <citation type="submission" date="1999-06" db="EMBL/GenBank/DDBJ databases">
        <title>Differential regulation of Drosophila GTP cyclohydrolase I isoforms and their interaction with tyrosine hydroxylase.</title>
        <authorList>
            <person name="Xu D."/>
            <person name="Neckameyer W."/>
            <person name="O'Donnell J."/>
        </authorList>
    </citation>
    <scope>NUCLEOTIDE SEQUENCE [MRNA] (ISOFORM A)</scope>
    <source>
        <tissue>Embryo</tissue>
    </source>
</reference>
<reference key="3">
    <citation type="submission" date="2003-09" db="EMBL/GenBank/DDBJ databases">
        <title>Punch affects life history traits in Drosophila melanogaster.</title>
        <authorList>
            <person name="Geiger-Thornsberry G.L."/>
            <person name="Harbison S.T."/>
            <person name="Lyman R.F."/>
            <person name="Mackay T.F.C."/>
        </authorList>
    </citation>
    <scope>NUCLEOTIDE SEQUENCE [GENOMIC DNA]</scope>
    <scope>VARIANTS THR-58; PRO-61; VAL-77 AND SER-84</scope>
    <source>
        <strain>Raleigh Inbred 1</strain>
        <strain>Raleigh Inbred 11</strain>
        <strain>Raleigh Inbred 24</strain>
        <strain>Raleigh Inbred 27</strain>
        <strain>Raleigh Inbred 30</strain>
        <strain>Raleigh Inbred 33</strain>
        <strain>Raleigh Inbred 6</strain>
        <strain>Raleigh Inbred 9</strain>
    </source>
</reference>
<reference key="4">
    <citation type="journal article" date="2000" name="Science">
        <title>The genome sequence of Drosophila melanogaster.</title>
        <authorList>
            <person name="Adams M.D."/>
            <person name="Celniker S.E."/>
            <person name="Holt R.A."/>
            <person name="Evans C.A."/>
            <person name="Gocayne J.D."/>
            <person name="Amanatides P.G."/>
            <person name="Scherer S.E."/>
            <person name="Li P.W."/>
            <person name="Hoskins R.A."/>
            <person name="Galle R.F."/>
            <person name="George R.A."/>
            <person name="Lewis S.E."/>
            <person name="Richards S."/>
            <person name="Ashburner M."/>
            <person name="Henderson S.N."/>
            <person name="Sutton G.G."/>
            <person name="Wortman J.R."/>
            <person name="Yandell M.D."/>
            <person name="Zhang Q."/>
            <person name="Chen L.X."/>
            <person name="Brandon R.C."/>
            <person name="Rogers Y.-H.C."/>
            <person name="Blazej R.G."/>
            <person name="Champe M."/>
            <person name="Pfeiffer B.D."/>
            <person name="Wan K.H."/>
            <person name="Doyle C."/>
            <person name="Baxter E.G."/>
            <person name="Helt G."/>
            <person name="Nelson C.R."/>
            <person name="Miklos G.L.G."/>
            <person name="Abril J.F."/>
            <person name="Agbayani A."/>
            <person name="An H.-J."/>
            <person name="Andrews-Pfannkoch C."/>
            <person name="Baldwin D."/>
            <person name="Ballew R.M."/>
            <person name="Basu A."/>
            <person name="Baxendale J."/>
            <person name="Bayraktaroglu L."/>
            <person name="Beasley E.M."/>
            <person name="Beeson K.Y."/>
            <person name="Benos P.V."/>
            <person name="Berman B.P."/>
            <person name="Bhandari D."/>
            <person name="Bolshakov S."/>
            <person name="Borkova D."/>
            <person name="Botchan M.R."/>
            <person name="Bouck J."/>
            <person name="Brokstein P."/>
            <person name="Brottier P."/>
            <person name="Burtis K.C."/>
            <person name="Busam D.A."/>
            <person name="Butler H."/>
            <person name="Cadieu E."/>
            <person name="Center A."/>
            <person name="Chandra I."/>
            <person name="Cherry J.M."/>
            <person name="Cawley S."/>
            <person name="Dahlke C."/>
            <person name="Davenport L.B."/>
            <person name="Davies P."/>
            <person name="de Pablos B."/>
            <person name="Delcher A."/>
            <person name="Deng Z."/>
            <person name="Mays A.D."/>
            <person name="Dew I."/>
            <person name="Dietz S.M."/>
            <person name="Dodson K."/>
            <person name="Doup L.E."/>
            <person name="Downes M."/>
            <person name="Dugan-Rocha S."/>
            <person name="Dunkov B.C."/>
            <person name="Dunn P."/>
            <person name="Durbin K.J."/>
            <person name="Evangelista C.C."/>
            <person name="Ferraz C."/>
            <person name="Ferriera S."/>
            <person name="Fleischmann W."/>
            <person name="Fosler C."/>
            <person name="Gabrielian A.E."/>
            <person name="Garg N.S."/>
            <person name="Gelbart W.M."/>
            <person name="Glasser K."/>
            <person name="Glodek A."/>
            <person name="Gong F."/>
            <person name="Gorrell J.H."/>
            <person name="Gu Z."/>
            <person name="Guan P."/>
            <person name="Harris M."/>
            <person name="Harris N.L."/>
            <person name="Harvey D.A."/>
            <person name="Heiman T.J."/>
            <person name="Hernandez J.R."/>
            <person name="Houck J."/>
            <person name="Hostin D."/>
            <person name="Houston K.A."/>
            <person name="Howland T.J."/>
            <person name="Wei M.-H."/>
            <person name="Ibegwam C."/>
            <person name="Jalali M."/>
            <person name="Kalush F."/>
            <person name="Karpen G.H."/>
            <person name="Ke Z."/>
            <person name="Kennison J.A."/>
            <person name="Ketchum K.A."/>
            <person name="Kimmel B.E."/>
            <person name="Kodira C.D."/>
            <person name="Kraft C.L."/>
            <person name="Kravitz S."/>
            <person name="Kulp D."/>
            <person name="Lai Z."/>
            <person name="Lasko P."/>
            <person name="Lei Y."/>
            <person name="Levitsky A.A."/>
            <person name="Li J.H."/>
            <person name="Li Z."/>
            <person name="Liang Y."/>
            <person name="Lin X."/>
            <person name="Liu X."/>
            <person name="Mattei B."/>
            <person name="McIntosh T.C."/>
            <person name="McLeod M.P."/>
            <person name="McPherson D."/>
            <person name="Merkulov G."/>
            <person name="Milshina N.V."/>
            <person name="Mobarry C."/>
            <person name="Morris J."/>
            <person name="Moshrefi A."/>
            <person name="Mount S.M."/>
            <person name="Moy M."/>
            <person name="Murphy B."/>
            <person name="Murphy L."/>
            <person name="Muzny D.M."/>
            <person name="Nelson D.L."/>
            <person name="Nelson D.R."/>
            <person name="Nelson K.A."/>
            <person name="Nixon K."/>
            <person name="Nusskern D.R."/>
            <person name="Pacleb J.M."/>
            <person name="Palazzolo M."/>
            <person name="Pittman G.S."/>
            <person name="Pan S."/>
            <person name="Pollard J."/>
            <person name="Puri V."/>
            <person name="Reese M.G."/>
            <person name="Reinert K."/>
            <person name="Remington K."/>
            <person name="Saunders R.D.C."/>
            <person name="Scheeler F."/>
            <person name="Shen H."/>
            <person name="Shue B.C."/>
            <person name="Siden-Kiamos I."/>
            <person name="Simpson M."/>
            <person name="Skupski M.P."/>
            <person name="Smith T.J."/>
            <person name="Spier E."/>
            <person name="Spradling A.C."/>
            <person name="Stapleton M."/>
            <person name="Strong R."/>
            <person name="Sun E."/>
            <person name="Svirskas R."/>
            <person name="Tector C."/>
            <person name="Turner R."/>
            <person name="Venter E."/>
            <person name="Wang A.H."/>
            <person name="Wang X."/>
            <person name="Wang Z.-Y."/>
            <person name="Wassarman D.A."/>
            <person name="Weinstock G.M."/>
            <person name="Weissenbach J."/>
            <person name="Williams S.M."/>
            <person name="Woodage T."/>
            <person name="Worley K.C."/>
            <person name="Wu D."/>
            <person name="Yang S."/>
            <person name="Yao Q.A."/>
            <person name="Ye J."/>
            <person name="Yeh R.-F."/>
            <person name="Zaveri J.S."/>
            <person name="Zhan M."/>
            <person name="Zhang G."/>
            <person name="Zhao Q."/>
            <person name="Zheng L."/>
            <person name="Zheng X.H."/>
            <person name="Zhong F.N."/>
            <person name="Zhong W."/>
            <person name="Zhou X."/>
            <person name="Zhu S.C."/>
            <person name="Zhu X."/>
            <person name="Smith H.O."/>
            <person name="Gibbs R.A."/>
            <person name="Myers E.W."/>
            <person name="Rubin G.M."/>
            <person name="Venter J.C."/>
        </authorList>
    </citation>
    <scope>NUCLEOTIDE SEQUENCE [LARGE SCALE GENOMIC DNA]</scope>
    <source>
        <strain>Berkeley</strain>
    </source>
</reference>
<reference key="5">
    <citation type="journal article" date="2002" name="Genome Biol.">
        <title>Annotation of the Drosophila melanogaster euchromatic genome: a systematic review.</title>
        <authorList>
            <person name="Misra S."/>
            <person name="Crosby M.A."/>
            <person name="Mungall C.J."/>
            <person name="Matthews B.B."/>
            <person name="Campbell K.S."/>
            <person name="Hradecky P."/>
            <person name="Huang Y."/>
            <person name="Kaminker J.S."/>
            <person name="Millburn G.H."/>
            <person name="Prochnik S.E."/>
            <person name="Smith C.D."/>
            <person name="Tupy J.L."/>
            <person name="Whitfield E.J."/>
            <person name="Bayraktaroglu L."/>
            <person name="Berman B.P."/>
            <person name="Bettencourt B.R."/>
            <person name="Celniker S.E."/>
            <person name="de Grey A.D.N.J."/>
            <person name="Drysdale R.A."/>
            <person name="Harris N.L."/>
            <person name="Richter J."/>
            <person name="Russo S."/>
            <person name="Schroeder A.J."/>
            <person name="Shu S.Q."/>
            <person name="Stapleton M."/>
            <person name="Yamada C."/>
            <person name="Ashburner M."/>
            <person name="Gelbart W.M."/>
            <person name="Rubin G.M."/>
            <person name="Lewis S.E."/>
        </authorList>
    </citation>
    <scope>GENOME REANNOTATION</scope>
    <scope>ALTERNATIVE SPLICING</scope>
    <source>
        <strain>Berkeley</strain>
    </source>
</reference>
<reference key="6">
    <citation type="journal article" date="2002" name="Genome Biol.">
        <title>A Drosophila full-length cDNA resource.</title>
        <authorList>
            <person name="Stapleton M."/>
            <person name="Carlson J.W."/>
            <person name="Brokstein P."/>
            <person name="Yu C."/>
            <person name="Champe M."/>
            <person name="George R.A."/>
            <person name="Guarin H."/>
            <person name="Kronmiller B."/>
            <person name="Pacleb J.M."/>
            <person name="Park S."/>
            <person name="Wan K.H."/>
            <person name="Rubin G.M."/>
            <person name="Celniker S.E."/>
        </authorList>
    </citation>
    <scope>NUCLEOTIDE SEQUENCE [LARGE SCALE MRNA] (ISOFORM A)</scope>
    <source>
        <strain>Berkeley</strain>
        <tissue>Embryo</tissue>
    </source>
</reference>
<reference key="7">
    <citation type="journal article" date="1986" name="J. Biol. Chem.">
        <title>Purification and characterization of GTP cyclohydrolase I from Drosophila melanogaster.</title>
        <authorList>
            <person name="Weisberg E.P."/>
            <person name="O'Donnell J.M."/>
        </authorList>
    </citation>
    <scope>CATALYTIC ACTIVITY</scope>
    <scope>PATHWAY</scope>
</reference>
<name>GCH1_DROME</name>
<evidence type="ECO:0000250" key="1">
    <source>
        <dbReference type="UniProtKB" id="P30793"/>
    </source>
</evidence>
<evidence type="ECO:0000256" key="2">
    <source>
        <dbReference type="SAM" id="MobiDB-lite"/>
    </source>
</evidence>
<evidence type="ECO:0000269" key="3">
    <source>
    </source>
</evidence>
<evidence type="ECO:0000269" key="4">
    <source>
    </source>
</evidence>
<evidence type="ECO:0000269" key="5">
    <source ref="3"/>
</evidence>
<evidence type="ECO:0000303" key="6">
    <source>
    </source>
</evidence>
<evidence type="ECO:0000305" key="7"/>
<evidence type="ECO:0000305" key="8">
    <source>
    </source>
</evidence>
<proteinExistence type="evidence at protein level"/>
<gene>
    <name type="primary">Pu</name>
    <name type="ORF">CG9441</name>
</gene>
<protein>
    <recommendedName>
        <fullName>GTP cyclohydrolase 1</fullName>
        <ecNumber evidence="3">3.5.4.16</ecNumber>
    </recommendedName>
    <alternativeName>
        <fullName>GTP cyclohydrolase I</fullName>
        <shortName>GTP-CH-I</shortName>
    </alternativeName>
    <alternativeName>
        <fullName>Protein punch</fullName>
    </alternativeName>
</protein>
<keyword id="KW-0021">Allosteric enzyme</keyword>
<keyword id="KW-0025">Alternative splicing</keyword>
<keyword id="KW-0342">GTP-binding</keyword>
<keyword id="KW-0378">Hydrolase</keyword>
<keyword id="KW-0479">Metal-binding</keyword>
<keyword id="KW-0547">Nucleotide-binding</keyword>
<keyword id="KW-1185">Reference proteome</keyword>
<keyword id="KW-0783">Tetrahydrobiopterin biosynthesis</keyword>
<keyword id="KW-0862">Zinc</keyword>
<dbReference type="EC" id="3.5.4.16" evidence="3"/>
<dbReference type="EMBL" id="U01118">
    <property type="protein sequence ID" value="AAC04308.1"/>
    <property type="status" value="ALT_FRAME"/>
    <property type="molecule type" value="mRNA"/>
</dbReference>
<dbReference type="EMBL" id="U01119">
    <property type="protein sequence ID" value="AAC04309.1"/>
    <property type="status" value="ALT_FRAME"/>
    <property type="molecule type" value="mRNA"/>
</dbReference>
<dbReference type="EMBL" id="AF159422">
    <property type="protein sequence ID" value="AAD44334.1"/>
    <property type="status" value="ALT_FRAME"/>
    <property type="molecule type" value="mRNA"/>
</dbReference>
<dbReference type="EMBL" id="AY382619">
    <property type="protein sequence ID" value="AAR20848.1"/>
    <property type="molecule type" value="Genomic_DNA"/>
</dbReference>
<dbReference type="EMBL" id="AY382620">
    <property type="protein sequence ID" value="AAR20850.1"/>
    <property type="molecule type" value="Genomic_DNA"/>
</dbReference>
<dbReference type="EMBL" id="AY382622">
    <property type="protein sequence ID" value="AAR20852.1"/>
    <property type="molecule type" value="Genomic_DNA"/>
</dbReference>
<dbReference type="EMBL" id="AY382623">
    <property type="protein sequence ID" value="AAR20854.1"/>
    <property type="molecule type" value="Genomic_DNA"/>
</dbReference>
<dbReference type="EMBL" id="AY382624">
    <property type="protein sequence ID" value="AAR20855.1"/>
    <property type="molecule type" value="Genomic_DNA"/>
</dbReference>
<dbReference type="EMBL" id="AY382625">
    <property type="protein sequence ID" value="AAR20857.2"/>
    <property type="status" value="ALT_FRAME"/>
    <property type="molecule type" value="Genomic_DNA"/>
</dbReference>
<dbReference type="EMBL" id="AY382626">
    <property type="protein sequence ID" value="AAR20859.1"/>
    <property type="molecule type" value="Genomic_DNA"/>
</dbReference>
<dbReference type="EMBL" id="AY382628">
    <property type="protein sequence ID" value="AAR20862.1"/>
    <property type="molecule type" value="Genomic_DNA"/>
</dbReference>
<dbReference type="EMBL" id="AE013599">
    <property type="protein sequence ID" value="AAF46690.1"/>
    <property type="molecule type" value="Genomic_DNA"/>
</dbReference>
<dbReference type="EMBL" id="AE013599">
    <property type="protein sequence ID" value="AAF46692.1"/>
    <property type="molecule type" value="Genomic_DNA"/>
</dbReference>
<dbReference type="EMBL" id="AE013599">
    <property type="protein sequence ID" value="AAM70858.1"/>
    <property type="molecule type" value="Genomic_DNA"/>
</dbReference>
<dbReference type="EMBL" id="AY051890">
    <property type="protein sequence ID" value="AAK93314.1"/>
    <property type="molecule type" value="mRNA"/>
</dbReference>
<dbReference type="PIR" id="A49302">
    <property type="entry name" value="A49302"/>
</dbReference>
<dbReference type="PIR" id="B49302">
    <property type="entry name" value="B49302"/>
</dbReference>
<dbReference type="RefSeq" id="NP_523801.2">
    <molecule id="P48596-3"/>
    <property type="nucleotide sequence ID" value="NM_079077.4"/>
</dbReference>
<dbReference type="RefSeq" id="NP_726037.1">
    <molecule id="P48596-2"/>
    <property type="nucleotide sequence ID" value="NM_166430.3"/>
</dbReference>
<dbReference type="RefSeq" id="NP_726038.1">
    <molecule id="P48596-1"/>
    <property type="nucleotide sequence ID" value="NM_166431.4"/>
</dbReference>
<dbReference type="SMR" id="P48596"/>
<dbReference type="BioGRID" id="63049">
    <property type="interactions" value="24"/>
</dbReference>
<dbReference type="DIP" id="DIP-24104N"/>
<dbReference type="FunCoup" id="P48596">
    <property type="interactions" value="337"/>
</dbReference>
<dbReference type="IntAct" id="P48596">
    <property type="interactions" value="14"/>
</dbReference>
<dbReference type="STRING" id="7227.FBpp0071507"/>
<dbReference type="PaxDb" id="7227-FBpp0071507"/>
<dbReference type="DNASU" id="37415"/>
<dbReference type="EnsemblMetazoa" id="FBtr0071578">
    <molecule id="P48596-2"/>
    <property type="protein sequence ID" value="FBpp0071505"/>
    <property type="gene ID" value="FBgn0003162"/>
</dbReference>
<dbReference type="EnsemblMetazoa" id="FBtr0071579">
    <molecule id="P48596-3"/>
    <property type="protein sequence ID" value="FBpp0071506"/>
    <property type="gene ID" value="FBgn0003162"/>
</dbReference>
<dbReference type="EnsemblMetazoa" id="FBtr0071580">
    <molecule id="P48596-1"/>
    <property type="protein sequence ID" value="FBpp0071507"/>
    <property type="gene ID" value="FBgn0003162"/>
</dbReference>
<dbReference type="GeneID" id="37415"/>
<dbReference type="KEGG" id="dme:Dmel_CG9441"/>
<dbReference type="AGR" id="FB:FBgn0003162"/>
<dbReference type="CTD" id="37415"/>
<dbReference type="FlyBase" id="FBgn0003162">
    <property type="gene designation" value="Pu"/>
</dbReference>
<dbReference type="VEuPathDB" id="VectorBase:FBgn0003162"/>
<dbReference type="eggNOG" id="KOG2698">
    <property type="taxonomic scope" value="Eukaryota"/>
</dbReference>
<dbReference type="GeneTree" id="ENSGT00390000013481"/>
<dbReference type="InParanoid" id="P48596"/>
<dbReference type="OMA" id="ENGHEHC"/>
<dbReference type="OrthoDB" id="4966at2759"/>
<dbReference type="PhylomeDB" id="P48596"/>
<dbReference type="BioCyc" id="MetaCyc:MONOMER-18450"/>
<dbReference type="BRENDA" id="3.5.4.16">
    <property type="organism ID" value="1994"/>
</dbReference>
<dbReference type="Reactome" id="R-DME-1474151">
    <property type="pathway name" value="Tetrahydrobiopterin (BH4) synthesis, recycling, salvage and regulation"/>
</dbReference>
<dbReference type="UniPathway" id="UPA00848">
    <property type="reaction ID" value="UER00151"/>
</dbReference>
<dbReference type="BioGRID-ORCS" id="37415">
    <property type="hits" value="0 hits in 1 CRISPR screen"/>
</dbReference>
<dbReference type="ChiTaRS" id="Pu">
    <property type="organism name" value="fly"/>
</dbReference>
<dbReference type="GenomeRNAi" id="37415"/>
<dbReference type="PRO" id="PR:P48596"/>
<dbReference type="Proteomes" id="UP000000803">
    <property type="component" value="Chromosome 2R"/>
</dbReference>
<dbReference type="Bgee" id="FBgn0003162">
    <property type="expression patterns" value="Expressed in compound eye cone cell in insect head and 135 other cell types or tissues"/>
</dbReference>
<dbReference type="ExpressionAtlas" id="P48596">
    <property type="expression patterns" value="baseline and differential"/>
</dbReference>
<dbReference type="GO" id="GO:0005737">
    <property type="term" value="C:cytoplasm"/>
    <property type="evidence" value="ECO:0000314"/>
    <property type="project" value="FlyBase"/>
</dbReference>
<dbReference type="GO" id="GO:0005525">
    <property type="term" value="F:GTP binding"/>
    <property type="evidence" value="ECO:0000318"/>
    <property type="project" value="GO_Central"/>
</dbReference>
<dbReference type="GO" id="GO:0003934">
    <property type="term" value="F:GTP cyclohydrolase I activity"/>
    <property type="evidence" value="ECO:0000314"/>
    <property type="project" value="FlyBase"/>
</dbReference>
<dbReference type="GO" id="GO:0060308">
    <property type="term" value="F:GTP cyclohydrolase I regulator activity"/>
    <property type="evidence" value="ECO:0000314"/>
    <property type="project" value="FlyBase"/>
</dbReference>
<dbReference type="GO" id="GO:0008270">
    <property type="term" value="F:zinc ion binding"/>
    <property type="evidence" value="ECO:0000318"/>
    <property type="project" value="GO_Central"/>
</dbReference>
<dbReference type="GO" id="GO:0048072">
    <property type="term" value="P:compound eye pigmentation"/>
    <property type="evidence" value="ECO:0000315"/>
    <property type="project" value="FlyBase"/>
</dbReference>
<dbReference type="GO" id="GO:0048067">
    <property type="term" value="P:cuticle pigmentation"/>
    <property type="evidence" value="ECO:0000315"/>
    <property type="project" value="FlyBase"/>
</dbReference>
<dbReference type="GO" id="GO:0009880">
    <property type="term" value="P:embryonic pattern specification"/>
    <property type="evidence" value="ECO:0000315"/>
    <property type="project" value="FlyBase"/>
</dbReference>
<dbReference type="GO" id="GO:0008363">
    <property type="term" value="P:larval chitin-based cuticle development"/>
    <property type="evidence" value="ECO:0000315"/>
    <property type="project" value="FlyBase"/>
</dbReference>
<dbReference type="GO" id="GO:0035185">
    <property type="term" value="P:preblastoderm mitotic cell cycle"/>
    <property type="evidence" value="ECO:0000315"/>
    <property type="project" value="FlyBase"/>
</dbReference>
<dbReference type="GO" id="GO:0006728">
    <property type="term" value="P:pteridine biosynthetic process"/>
    <property type="evidence" value="ECO:0000315"/>
    <property type="project" value="FlyBase"/>
</dbReference>
<dbReference type="GO" id="GO:2000274">
    <property type="term" value="P:regulation of epithelial cell migration, open tracheal system"/>
    <property type="evidence" value="ECO:0000315"/>
    <property type="project" value="FlyBase"/>
</dbReference>
<dbReference type="GO" id="GO:0006729">
    <property type="term" value="P:tetrahydrobiopterin biosynthetic process"/>
    <property type="evidence" value="ECO:0000314"/>
    <property type="project" value="UniProtKB"/>
</dbReference>
<dbReference type="GO" id="GO:0046654">
    <property type="term" value="P:tetrahydrofolate biosynthetic process"/>
    <property type="evidence" value="ECO:0007669"/>
    <property type="project" value="InterPro"/>
</dbReference>
<dbReference type="CDD" id="cd00642">
    <property type="entry name" value="GTP_cyclohydro1"/>
    <property type="match status" value="1"/>
</dbReference>
<dbReference type="FunFam" id="1.10.286.10:FF:000003">
    <property type="entry name" value="GTP cyclohydrolase 1"/>
    <property type="match status" value="1"/>
</dbReference>
<dbReference type="FunFam" id="3.30.1130.10:FF:000012">
    <property type="entry name" value="GTP cyclohydrolase 1"/>
    <property type="match status" value="1"/>
</dbReference>
<dbReference type="Gene3D" id="1.10.286.10">
    <property type="match status" value="1"/>
</dbReference>
<dbReference type="Gene3D" id="3.30.1130.10">
    <property type="match status" value="1"/>
</dbReference>
<dbReference type="HAMAP" id="MF_00223">
    <property type="entry name" value="FolE"/>
    <property type="match status" value="1"/>
</dbReference>
<dbReference type="InterPro" id="IPR043133">
    <property type="entry name" value="GTP-CH-I_C/QueF"/>
</dbReference>
<dbReference type="InterPro" id="IPR043134">
    <property type="entry name" value="GTP-CH-I_N"/>
</dbReference>
<dbReference type="InterPro" id="IPR001474">
    <property type="entry name" value="GTP_CycHdrlase_I"/>
</dbReference>
<dbReference type="InterPro" id="IPR018234">
    <property type="entry name" value="GTP_CycHdrlase_I_CS"/>
</dbReference>
<dbReference type="InterPro" id="IPR020602">
    <property type="entry name" value="GTP_CycHdrlase_I_dom"/>
</dbReference>
<dbReference type="NCBIfam" id="TIGR00063">
    <property type="entry name" value="folE"/>
    <property type="match status" value="1"/>
</dbReference>
<dbReference type="NCBIfam" id="NF006825">
    <property type="entry name" value="PRK09347.1-2"/>
    <property type="match status" value="1"/>
</dbReference>
<dbReference type="NCBIfam" id="NF006826">
    <property type="entry name" value="PRK09347.1-3"/>
    <property type="match status" value="1"/>
</dbReference>
<dbReference type="PANTHER" id="PTHR11109:SF7">
    <property type="entry name" value="GTP CYCLOHYDROLASE 1"/>
    <property type="match status" value="1"/>
</dbReference>
<dbReference type="PANTHER" id="PTHR11109">
    <property type="entry name" value="GTP CYCLOHYDROLASE I"/>
    <property type="match status" value="1"/>
</dbReference>
<dbReference type="Pfam" id="PF01227">
    <property type="entry name" value="GTP_cyclohydroI"/>
    <property type="match status" value="1"/>
</dbReference>
<dbReference type="SUPFAM" id="SSF55620">
    <property type="entry name" value="Tetrahydrobiopterin biosynthesis enzymes-like"/>
    <property type="match status" value="1"/>
</dbReference>
<dbReference type="PROSITE" id="PS00859">
    <property type="entry name" value="GTP_CYCLOHYDROL_1_1"/>
    <property type="match status" value="1"/>
</dbReference>
<dbReference type="PROSITE" id="PS00860">
    <property type="entry name" value="GTP_CYCLOHYDROL_1_2"/>
    <property type="match status" value="1"/>
</dbReference>
<feature type="chain" id="PRO_0000119482" description="GTP cyclohydrolase 1">
    <location>
        <begin position="1"/>
        <end position="324"/>
    </location>
</feature>
<feature type="region of interest" description="Disordered" evidence="2">
    <location>
        <begin position="33"/>
        <end position="59"/>
    </location>
</feature>
<feature type="region of interest" description="Disordered" evidence="2">
    <location>
        <begin position="79"/>
        <end position="119"/>
    </location>
</feature>
<feature type="compositionally biased region" description="Low complexity" evidence="2">
    <location>
        <begin position="40"/>
        <end position="49"/>
    </location>
</feature>
<feature type="compositionally biased region" description="Polar residues" evidence="2">
    <location>
        <begin position="50"/>
        <end position="59"/>
    </location>
</feature>
<feature type="compositionally biased region" description="Polar residues" evidence="2">
    <location>
        <begin position="93"/>
        <end position="117"/>
    </location>
</feature>
<feature type="binding site" evidence="1">
    <location>
        <position position="214"/>
    </location>
    <ligand>
        <name>Zn(2+)</name>
        <dbReference type="ChEBI" id="CHEBI:29105"/>
    </ligand>
</feature>
<feature type="binding site" evidence="1">
    <location>
        <position position="217"/>
    </location>
    <ligand>
        <name>Zn(2+)</name>
        <dbReference type="ChEBI" id="CHEBI:29105"/>
    </ligand>
</feature>
<feature type="binding site" evidence="1">
    <location>
        <position position="285"/>
    </location>
    <ligand>
        <name>Zn(2+)</name>
        <dbReference type="ChEBI" id="CHEBI:29105"/>
    </ligand>
</feature>
<feature type="splice variant" id="VSP_001616" description="In isoform B." evidence="6">
    <original>MSFTRQLSEMSASELNDAIDDTNFPQAHILSRGRNNSVCSTSSTSGTSSLADRQQNQAEEATAIAGTPVEEVAPAPALVPLAGNQRPRLILKTNGSSPDSDGTQPKTPLTPRTSTTP</original>
    <variation>MKPQTSEQNGSGQNGEGAADAVAVATIPTGEASAASATSGTDLTVSKNSQQLKLEMLNLELASNGS</variation>
    <location>
        <begin position="1"/>
        <end position="117"/>
    </location>
</feature>
<feature type="splice variant" id="VSP_001615" description="In isoform C." evidence="6">
    <location>
        <begin position="102"/>
        <end position="117"/>
    </location>
</feature>
<feature type="sequence variant" description="In strain: Raleigh Inbred 6, Raleigh Inbred 9, Raleigh Inbred 11, Raleigh Inbred 27 and Raleigh Inbred 33." evidence="5">
    <original>A</original>
    <variation>T</variation>
    <location>
        <position position="58"/>
    </location>
</feature>
<feature type="sequence variant" description="In strain: Raleigh Inbred 6, Raleigh Inbred 9, Raleigh Inbred 11, Raleigh Inbred 27 and Raleigh Inbred 33." evidence="5">
    <original>A</original>
    <variation>P</variation>
    <location>
        <position position="61"/>
    </location>
</feature>
<feature type="sequence variant" description="In strain: Raleigh Inbred 11." evidence="5">
    <original>A</original>
    <variation>V</variation>
    <location>
        <position position="77"/>
    </location>
</feature>
<feature type="sequence variant" description="In strain: Raleigh Inbred 6, Raleigh Inbred 9, Raleigh Inbred 11 and Raleigh Inbred 33." evidence="5">
    <original>N</original>
    <variation>S</variation>
    <location>
        <position position="84"/>
    </location>
</feature>
<comment type="function">
    <text evidence="4">Isoform B is required for eye pigment production, Isoform C may be required for normal embryonic development and segment pattern formation.</text>
</comment>
<comment type="catalytic activity">
    <reaction evidence="3">
        <text>GTP + H2O = 7,8-dihydroneopterin 3'-triphosphate + formate + H(+)</text>
        <dbReference type="Rhea" id="RHEA:17473"/>
        <dbReference type="ChEBI" id="CHEBI:15377"/>
        <dbReference type="ChEBI" id="CHEBI:15378"/>
        <dbReference type="ChEBI" id="CHEBI:15740"/>
        <dbReference type="ChEBI" id="CHEBI:37565"/>
        <dbReference type="ChEBI" id="CHEBI:58462"/>
        <dbReference type="EC" id="3.5.4.16"/>
    </reaction>
</comment>
<comment type="pathway">
    <text evidence="8">Cofactor biosynthesis; 7,8-dihydroneopterin triphosphate biosynthesis; 7,8-dihydroneopterin triphosphate from GTP: step 1/1.</text>
</comment>
<comment type="subunit">
    <text evidence="1">Toroid-shaped homodecamer, composed of two pentamers of five dimers.</text>
</comment>
<comment type="alternative products">
    <event type="alternative splicing"/>
    <isoform>
        <id>P48596-1</id>
        <name>A</name>
        <name>C</name>
        <sequence type="displayed"/>
    </isoform>
    <isoform>
        <id>P48596-2</id>
        <name>B</name>
        <sequence type="described" ref="VSP_001616"/>
    </isoform>
    <isoform>
        <id>P48596-3</id>
        <name>C</name>
        <sequence type="described" ref="VSP_001615"/>
    </isoform>
</comment>
<comment type="tissue specificity">
    <text evidence="4">Isoform B is expressed almost exclusively in adult heads.</text>
</comment>
<comment type="developmental stage">
    <text evidence="4">Isoform C is expressed in embryos, larvae and adults.</text>
</comment>
<comment type="similarity">
    <text evidence="7">Belongs to the GTP cyclohydrolase I family.</text>
</comment>
<comment type="sequence caution" evidence="7">
    <conflict type="frameshift">
        <sequence resource="EMBL-CDS" id="AAC04308"/>
    </conflict>
</comment>
<comment type="sequence caution" evidence="7">
    <conflict type="frameshift">
        <sequence resource="EMBL-CDS" id="AAC04309"/>
    </conflict>
</comment>
<comment type="sequence caution" evidence="7">
    <conflict type="frameshift">
        <sequence resource="EMBL-CDS" id="AAD44334"/>
    </conflict>
</comment>
<comment type="sequence caution" evidence="7">
    <conflict type="frameshift">
        <sequence resource="EMBL-CDS" id="AAR20857"/>
    </conflict>
</comment>